<keyword id="KW-1185">Reference proteome</keyword>
<organism>
    <name type="scientific">Shigella flexneri</name>
    <dbReference type="NCBI Taxonomy" id="623"/>
    <lineage>
        <taxon>Bacteria</taxon>
        <taxon>Pseudomonadati</taxon>
        <taxon>Pseudomonadota</taxon>
        <taxon>Gammaproteobacteria</taxon>
        <taxon>Enterobacterales</taxon>
        <taxon>Enterobacteriaceae</taxon>
        <taxon>Shigella</taxon>
    </lineage>
</organism>
<feature type="chain" id="PRO_0000168828" description="Uncharacterized protein YceQ">
    <location>
        <begin position="1"/>
        <end position="106"/>
    </location>
</feature>
<sequence length="106" mass="12100">MSVARFSCGKTAQLSKKQTGYYSPEIFPSTGKDCNPQPANCLKDQYVLRHCCVDDRSGKMGYSVKFLVLTRMDTETASLFHCKPCYSKMTFTIYHPLTHSFFTSCW</sequence>
<protein>
    <recommendedName>
        <fullName>Uncharacterized protein YceQ</fullName>
    </recommendedName>
</protein>
<name>YCEQ_SHIFL</name>
<dbReference type="EMBL" id="AE005674">
    <property type="protein sequence ID" value="AAN42708.1"/>
    <property type="status" value="ALT_INIT"/>
    <property type="molecule type" value="Genomic_DNA"/>
</dbReference>
<dbReference type="EMBL" id="AE014073">
    <property type="protein sequence ID" value="AAP16596.1"/>
    <property type="status" value="ALT_INIT"/>
    <property type="molecule type" value="Genomic_DNA"/>
</dbReference>
<dbReference type="RefSeq" id="NP_707001.1">
    <property type="nucleotide sequence ID" value="NC_004337.2"/>
</dbReference>
<dbReference type="STRING" id="198214.SF1089"/>
<dbReference type="PaxDb" id="198214-SF1089"/>
<dbReference type="GeneID" id="1024032"/>
<dbReference type="KEGG" id="sfl:SF1089"/>
<dbReference type="KEGG" id="sfx:S1169"/>
<dbReference type="PATRIC" id="fig|623.157.peg.3437"/>
<dbReference type="HOGENOM" id="CLU_163229_0_0_6"/>
<dbReference type="Proteomes" id="UP000001006">
    <property type="component" value="Chromosome"/>
</dbReference>
<dbReference type="Proteomes" id="UP000002673">
    <property type="component" value="Chromosome"/>
</dbReference>
<dbReference type="AntiFam" id="ANF00070">
    <property type="entry name" value="Spurious family"/>
</dbReference>
<comment type="sequence caution" evidence="1">
    <conflict type="erroneous initiation">
        <sequence resource="EMBL-CDS" id="AAN42708"/>
    </conflict>
</comment>
<comment type="sequence caution" evidence="1">
    <conflict type="erroneous initiation">
        <sequence resource="EMBL-CDS" id="AAP16596"/>
    </conflict>
</comment>
<accession>Q83LI5</accession>
<proteinExistence type="predicted"/>
<reference key="1">
    <citation type="journal article" date="2002" name="Nucleic Acids Res.">
        <title>Genome sequence of Shigella flexneri 2a: insights into pathogenicity through comparison with genomes of Escherichia coli K12 and O157.</title>
        <authorList>
            <person name="Jin Q."/>
            <person name="Yuan Z."/>
            <person name="Xu J."/>
            <person name="Wang Y."/>
            <person name="Shen Y."/>
            <person name="Lu W."/>
            <person name="Wang J."/>
            <person name="Liu H."/>
            <person name="Yang J."/>
            <person name="Yang F."/>
            <person name="Zhang X."/>
            <person name="Zhang J."/>
            <person name="Yang G."/>
            <person name="Wu H."/>
            <person name="Qu D."/>
            <person name="Dong J."/>
            <person name="Sun L."/>
            <person name="Xue Y."/>
            <person name="Zhao A."/>
            <person name="Gao Y."/>
            <person name="Zhu J."/>
            <person name="Kan B."/>
            <person name="Ding K."/>
            <person name="Chen S."/>
            <person name="Cheng H."/>
            <person name="Yao Z."/>
            <person name="He B."/>
            <person name="Chen R."/>
            <person name="Ma D."/>
            <person name="Qiang B."/>
            <person name="Wen Y."/>
            <person name="Hou Y."/>
            <person name="Yu J."/>
        </authorList>
    </citation>
    <scope>NUCLEOTIDE SEQUENCE [LARGE SCALE GENOMIC DNA]</scope>
    <source>
        <strain>301 / Serotype 2a</strain>
    </source>
</reference>
<reference key="2">
    <citation type="journal article" date="2003" name="Infect. Immun.">
        <title>Complete genome sequence and comparative genomics of Shigella flexneri serotype 2a strain 2457T.</title>
        <authorList>
            <person name="Wei J."/>
            <person name="Goldberg M.B."/>
            <person name="Burland V."/>
            <person name="Venkatesan M.M."/>
            <person name="Deng W."/>
            <person name="Fournier G."/>
            <person name="Mayhew G.F."/>
            <person name="Plunkett G. III"/>
            <person name="Rose D.J."/>
            <person name="Darling A."/>
            <person name="Mau B."/>
            <person name="Perna N.T."/>
            <person name="Payne S.M."/>
            <person name="Runyen-Janecky L.J."/>
            <person name="Zhou S."/>
            <person name="Schwartz D.C."/>
            <person name="Blattner F.R."/>
        </authorList>
    </citation>
    <scope>NUCLEOTIDE SEQUENCE [LARGE SCALE GENOMIC DNA]</scope>
    <source>
        <strain>ATCC 700930 / 2457T / Serotype 2a</strain>
    </source>
</reference>
<gene>
    <name type="primary">yceQ</name>
    <name type="ordered locus">SF1089</name>
    <name type="ordered locus">S1169</name>
</gene>
<evidence type="ECO:0000305" key="1"/>